<gene>
    <name evidence="1" type="primary">asnS</name>
    <name type="ordered locus">MSC_0080</name>
</gene>
<keyword id="KW-0030">Aminoacyl-tRNA synthetase</keyword>
<keyword id="KW-0067">ATP-binding</keyword>
<keyword id="KW-0963">Cytoplasm</keyword>
<keyword id="KW-0436">Ligase</keyword>
<keyword id="KW-0547">Nucleotide-binding</keyword>
<keyword id="KW-0648">Protein biosynthesis</keyword>
<keyword id="KW-1185">Reference proteome</keyword>
<proteinExistence type="inferred from homology"/>
<reference key="1">
    <citation type="journal article" date="2004" name="Genome Res.">
        <title>The genome sequence of Mycoplasma mycoides subsp. mycoides SC type strain PG1T, the causative agent of contagious bovine pleuropneumonia (CBPP).</title>
        <authorList>
            <person name="Westberg J."/>
            <person name="Persson A."/>
            <person name="Holmberg A."/>
            <person name="Goesmann A."/>
            <person name="Lundeberg J."/>
            <person name="Johansson K.-E."/>
            <person name="Pettersson B."/>
            <person name="Uhlen M."/>
        </authorList>
    </citation>
    <scope>NUCLEOTIDE SEQUENCE [LARGE SCALE GENOMIC DNA]</scope>
    <source>
        <strain>CCUG 32753 / NCTC 10114 / PG1</strain>
    </source>
</reference>
<evidence type="ECO:0000255" key="1">
    <source>
        <dbReference type="HAMAP-Rule" id="MF_00534"/>
    </source>
</evidence>
<feature type="chain" id="PRO_0000176431" description="Asparagine--tRNA ligase">
    <location>
        <begin position="1"/>
        <end position="452"/>
    </location>
</feature>
<dbReference type="EC" id="6.1.1.22" evidence="1"/>
<dbReference type="EMBL" id="BX293980">
    <property type="protein sequence ID" value="CAE76732.1"/>
    <property type="molecule type" value="Genomic_DNA"/>
</dbReference>
<dbReference type="RefSeq" id="NP_975090.1">
    <property type="nucleotide sequence ID" value="NC_005364.2"/>
</dbReference>
<dbReference type="RefSeq" id="WP_011166290.1">
    <property type="nucleotide sequence ID" value="NC_005364.2"/>
</dbReference>
<dbReference type="SMR" id="Q6MUF2"/>
<dbReference type="STRING" id="272632.MSC_0080"/>
<dbReference type="KEGG" id="mmy:MSC_0080"/>
<dbReference type="PATRIC" id="fig|272632.4.peg.82"/>
<dbReference type="eggNOG" id="COG0017">
    <property type="taxonomic scope" value="Bacteria"/>
</dbReference>
<dbReference type="HOGENOM" id="CLU_004553_2_0_14"/>
<dbReference type="Proteomes" id="UP000001016">
    <property type="component" value="Chromosome"/>
</dbReference>
<dbReference type="GO" id="GO:0005737">
    <property type="term" value="C:cytoplasm"/>
    <property type="evidence" value="ECO:0007669"/>
    <property type="project" value="UniProtKB-SubCell"/>
</dbReference>
<dbReference type="GO" id="GO:0004816">
    <property type="term" value="F:asparagine-tRNA ligase activity"/>
    <property type="evidence" value="ECO:0007669"/>
    <property type="project" value="UniProtKB-UniRule"/>
</dbReference>
<dbReference type="GO" id="GO:0005524">
    <property type="term" value="F:ATP binding"/>
    <property type="evidence" value="ECO:0007669"/>
    <property type="project" value="UniProtKB-UniRule"/>
</dbReference>
<dbReference type="GO" id="GO:0003676">
    <property type="term" value="F:nucleic acid binding"/>
    <property type="evidence" value="ECO:0007669"/>
    <property type="project" value="InterPro"/>
</dbReference>
<dbReference type="GO" id="GO:0006421">
    <property type="term" value="P:asparaginyl-tRNA aminoacylation"/>
    <property type="evidence" value="ECO:0007669"/>
    <property type="project" value="UniProtKB-UniRule"/>
</dbReference>
<dbReference type="CDD" id="cd00776">
    <property type="entry name" value="AsxRS_core"/>
    <property type="match status" value="1"/>
</dbReference>
<dbReference type="CDD" id="cd04318">
    <property type="entry name" value="EcAsnRS_like_N"/>
    <property type="match status" value="1"/>
</dbReference>
<dbReference type="FunFam" id="3.30.930.10:FF:000016">
    <property type="entry name" value="Asparagine--tRNA ligase"/>
    <property type="match status" value="1"/>
</dbReference>
<dbReference type="Gene3D" id="3.30.930.10">
    <property type="entry name" value="Bira Bifunctional Protein, Domain 2"/>
    <property type="match status" value="1"/>
</dbReference>
<dbReference type="Gene3D" id="2.40.50.140">
    <property type="entry name" value="Nucleic acid-binding proteins"/>
    <property type="match status" value="1"/>
</dbReference>
<dbReference type="HAMAP" id="MF_00534">
    <property type="entry name" value="Asn_tRNA_synth"/>
    <property type="match status" value="1"/>
</dbReference>
<dbReference type="InterPro" id="IPR004364">
    <property type="entry name" value="Aa-tRNA-synt_II"/>
</dbReference>
<dbReference type="InterPro" id="IPR006195">
    <property type="entry name" value="aa-tRNA-synth_II"/>
</dbReference>
<dbReference type="InterPro" id="IPR045864">
    <property type="entry name" value="aa-tRNA-synth_II/BPL/LPL"/>
</dbReference>
<dbReference type="InterPro" id="IPR004522">
    <property type="entry name" value="Asn-tRNA-ligase"/>
</dbReference>
<dbReference type="InterPro" id="IPR002312">
    <property type="entry name" value="Asp/Asn-tRNA-synth_IIb"/>
</dbReference>
<dbReference type="InterPro" id="IPR012340">
    <property type="entry name" value="NA-bd_OB-fold"/>
</dbReference>
<dbReference type="InterPro" id="IPR004365">
    <property type="entry name" value="NA-bd_OB_tRNA"/>
</dbReference>
<dbReference type="NCBIfam" id="TIGR00457">
    <property type="entry name" value="asnS"/>
    <property type="match status" value="1"/>
</dbReference>
<dbReference type="NCBIfam" id="NF003037">
    <property type="entry name" value="PRK03932.1"/>
    <property type="match status" value="1"/>
</dbReference>
<dbReference type="PANTHER" id="PTHR22594:SF34">
    <property type="entry name" value="ASPARAGINE--TRNA LIGASE, MITOCHONDRIAL-RELATED"/>
    <property type="match status" value="1"/>
</dbReference>
<dbReference type="PANTHER" id="PTHR22594">
    <property type="entry name" value="ASPARTYL/LYSYL-TRNA SYNTHETASE"/>
    <property type="match status" value="1"/>
</dbReference>
<dbReference type="Pfam" id="PF00152">
    <property type="entry name" value="tRNA-synt_2"/>
    <property type="match status" value="1"/>
</dbReference>
<dbReference type="Pfam" id="PF01336">
    <property type="entry name" value="tRNA_anti-codon"/>
    <property type="match status" value="1"/>
</dbReference>
<dbReference type="PRINTS" id="PR01042">
    <property type="entry name" value="TRNASYNTHASP"/>
</dbReference>
<dbReference type="SUPFAM" id="SSF55681">
    <property type="entry name" value="Class II aaRS and biotin synthetases"/>
    <property type="match status" value="1"/>
</dbReference>
<dbReference type="SUPFAM" id="SSF50249">
    <property type="entry name" value="Nucleic acid-binding proteins"/>
    <property type="match status" value="1"/>
</dbReference>
<dbReference type="PROSITE" id="PS50862">
    <property type="entry name" value="AA_TRNA_LIGASE_II"/>
    <property type="match status" value="1"/>
</dbReference>
<comment type="catalytic activity">
    <reaction evidence="1">
        <text>tRNA(Asn) + L-asparagine + ATP = L-asparaginyl-tRNA(Asn) + AMP + diphosphate + H(+)</text>
        <dbReference type="Rhea" id="RHEA:11180"/>
        <dbReference type="Rhea" id="RHEA-COMP:9659"/>
        <dbReference type="Rhea" id="RHEA-COMP:9674"/>
        <dbReference type="ChEBI" id="CHEBI:15378"/>
        <dbReference type="ChEBI" id="CHEBI:30616"/>
        <dbReference type="ChEBI" id="CHEBI:33019"/>
        <dbReference type="ChEBI" id="CHEBI:58048"/>
        <dbReference type="ChEBI" id="CHEBI:78442"/>
        <dbReference type="ChEBI" id="CHEBI:78515"/>
        <dbReference type="ChEBI" id="CHEBI:456215"/>
        <dbReference type="EC" id="6.1.1.22"/>
    </reaction>
</comment>
<comment type="subunit">
    <text evidence="1">Homodimer.</text>
</comment>
<comment type="subcellular location">
    <subcellularLocation>
        <location evidence="1">Cytoplasm</location>
    </subcellularLocation>
</comment>
<comment type="similarity">
    <text evidence="1">Belongs to the class-II aminoacyl-tRNA synthetase family.</text>
</comment>
<protein>
    <recommendedName>
        <fullName evidence="1">Asparagine--tRNA ligase</fullName>
        <ecNumber evidence="1">6.1.1.22</ecNumber>
    </recommendedName>
    <alternativeName>
        <fullName evidence="1">Asparaginyl-tRNA synthetase</fullName>
        <shortName evidence="1">AsnRS</shortName>
    </alternativeName>
</protein>
<sequence length="452" mass="52101">MEIRQIFEQHSGLLDKEVEILGRVRSNRQGKFVSFMILNDGTTFTDLQVVYKTKGYEQALQARVSSIVKVVGRVVLTPEKQQKFEVQADEIELIDQAIEDYPLQKKEHTTEYLREIAHLRAKTKTFNAIFKIRSAAAYAIHRFFNEKNFVYIHSPIITSNDAEGAGEAFLVTTREDADYEKDFFGKKASLTVSGQLHAEAFAQAFKKVYTFGPTFRAENSNTAKHAAEFWMIEPEVAFADLKDNIQLIQDMVKYIINYIFKHNRRELEFCNEQLENGLIDKLNNVRNSEFKVTTYTEAIEILKQAVKDGHKFEVSDIEFGLDLGTEHERYICEQVNKAPTFVTNYPKEIKAFYMKQNDDNKTVAAVDLLVPGIGELVGGSQREDNYEKLIKRCKEVNIDIDQLEWYNNLRLYGYYKSAGFGLGFERLVMYITGASNIRDVIPFPRTPKNLLF</sequence>
<name>SYN_MYCMS</name>
<organism>
    <name type="scientific">Mycoplasma mycoides subsp. mycoides SC (strain CCUG 32753 / NCTC 10114 / PG1)</name>
    <dbReference type="NCBI Taxonomy" id="272632"/>
    <lineage>
        <taxon>Bacteria</taxon>
        <taxon>Bacillati</taxon>
        <taxon>Mycoplasmatota</taxon>
        <taxon>Mollicutes</taxon>
        <taxon>Mycoplasmataceae</taxon>
        <taxon>Mycoplasma</taxon>
    </lineage>
</organism>
<accession>Q6MUF2</accession>